<gene>
    <name evidence="1" type="primary">argR</name>
    <name type="ordered locus">YPA_0067</name>
</gene>
<dbReference type="EMBL" id="CP000308">
    <property type="protein sequence ID" value="ABG12036.1"/>
    <property type="molecule type" value="Genomic_DNA"/>
</dbReference>
<dbReference type="RefSeq" id="WP_002210173.1">
    <property type="nucleotide sequence ID" value="NZ_CP009906.1"/>
</dbReference>
<dbReference type="SMR" id="Q1CBY6"/>
<dbReference type="GeneID" id="57975197"/>
<dbReference type="KEGG" id="ypa:YPA_0067"/>
<dbReference type="UniPathway" id="UPA00068"/>
<dbReference type="Proteomes" id="UP000001971">
    <property type="component" value="Chromosome"/>
</dbReference>
<dbReference type="GO" id="GO:0005737">
    <property type="term" value="C:cytoplasm"/>
    <property type="evidence" value="ECO:0007669"/>
    <property type="project" value="UniProtKB-SubCell"/>
</dbReference>
<dbReference type="GO" id="GO:0034618">
    <property type="term" value="F:arginine binding"/>
    <property type="evidence" value="ECO:0007669"/>
    <property type="project" value="InterPro"/>
</dbReference>
<dbReference type="GO" id="GO:0003677">
    <property type="term" value="F:DNA binding"/>
    <property type="evidence" value="ECO:0007669"/>
    <property type="project" value="UniProtKB-KW"/>
</dbReference>
<dbReference type="GO" id="GO:0003700">
    <property type="term" value="F:DNA-binding transcription factor activity"/>
    <property type="evidence" value="ECO:0007669"/>
    <property type="project" value="UniProtKB-UniRule"/>
</dbReference>
<dbReference type="GO" id="GO:0006526">
    <property type="term" value="P:L-arginine biosynthetic process"/>
    <property type="evidence" value="ECO:0007669"/>
    <property type="project" value="UniProtKB-UniPathway"/>
</dbReference>
<dbReference type="GO" id="GO:0051259">
    <property type="term" value="P:protein complex oligomerization"/>
    <property type="evidence" value="ECO:0007669"/>
    <property type="project" value="InterPro"/>
</dbReference>
<dbReference type="GO" id="GO:1900079">
    <property type="term" value="P:regulation of arginine biosynthetic process"/>
    <property type="evidence" value="ECO:0007669"/>
    <property type="project" value="UniProtKB-UniRule"/>
</dbReference>
<dbReference type="FunFam" id="1.10.10.10:FF:000074">
    <property type="entry name" value="Arginine repressor"/>
    <property type="match status" value="1"/>
</dbReference>
<dbReference type="FunFam" id="3.30.1360.40:FF:000004">
    <property type="entry name" value="Arginine repressor"/>
    <property type="match status" value="1"/>
</dbReference>
<dbReference type="Gene3D" id="3.30.1360.40">
    <property type="match status" value="1"/>
</dbReference>
<dbReference type="Gene3D" id="1.10.10.10">
    <property type="entry name" value="Winged helix-like DNA-binding domain superfamily/Winged helix DNA-binding domain"/>
    <property type="match status" value="1"/>
</dbReference>
<dbReference type="HAMAP" id="MF_00173">
    <property type="entry name" value="Arg_repressor"/>
    <property type="match status" value="1"/>
</dbReference>
<dbReference type="InterPro" id="IPR001669">
    <property type="entry name" value="Arg_repress"/>
</dbReference>
<dbReference type="InterPro" id="IPR020899">
    <property type="entry name" value="Arg_repress_C"/>
</dbReference>
<dbReference type="InterPro" id="IPR036251">
    <property type="entry name" value="Arg_repress_C_sf"/>
</dbReference>
<dbReference type="InterPro" id="IPR020900">
    <property type="entry name" value="Arg_repress_DNA-bd"/>
</dbReference>
<dbReference type="InterPro" id="IPR036388">
    <property type="entry name" value="WH-like_DNA-bd_sf"/>
</dbReference>
<dbReference type="InterPro" id="IPR036390">
    <property type="entry name" value="WH_DNA-bd_sf"/>
</dbReference>
<dbReference type="NCBIfam" id="TIGR01529">
    <property type="entry name" value="argR_whole"/>
    <property type="match status" value="1"/>
</dbReference>
<dbReference type="NCBIfam" id="NF003457">
    <property type="entry name" value="PRK05066.1"/>
    <property type="match status" value="1"/>
</dbReference>
<dbReference type="PANTHER" id="PTHR34471">
    <property type="entry name" value="ARGININE REPRESSOR"/>
    <property type="match status" value="1"/>
</dbReference>
<dbReference type="PANTHER" id="PTHR34471:SF1">
    <property type="entry name" value="ARGININE REPRESSOR"/>
    <property type="match status" value="1"/>
</dbReference>
<dbReference type="Pfam" id="PF01316">
    <property type="entry name" value="Arg_repressor"/>
    <property type="match status" value="1"/>
</dbReference>
<dbReference type="Pfam" id="PF02863">
    <property type="entry name" value="Arg_repressor_C"/>
    <property type="match status" value="1"/>
</dbReference>
<dbReference type="PRINTS" id="PR01467">
    <property type="entry name" value="ARGREPRESSOR"/>
</dbReference>
<dbReference type="SUPFAM" id="SSF55252">
    <property type="entry name" value="C-terminal domain of arginine repressor"/>
    <property type="match status" value="1"/>
</dbReference>
<dbReference type="SUPFAM" id="SSF46785">
    <property type="entry name" value="Winged helix' DNA-binding domain"/>
    <property type="match status" value="1"/>
</dbReference>
<comment type="function">
    <text evidence="1">Regulates arginine biosynthesis genes.</text>
</comment>
<comment type="pathway">
    <text>Amino-acid biosynthesis; L-arginine biosynthesis [regulation].</text>
</comment>
<comment type="subcellular location">
    <subcellularLocation>
        <location evidence="1">Cytoplasm</location>
    </subcellularLocation>
</comment>
<comment type="similarity">
    <text evidence="1">Belongs to the ArgR family.</text>
</comment>
<proteinExistence type="inferred from homology"/>
<accession>Q1CBY6</accession>
<reference key="1">
    <citation type="journal article" date="2006" name="J. Bacteriol.">
        <title>Complete genome sequence of Yersinia pestis strains Antiqua and Nepal516: evidence of gene reduction in an emerging pathogen.</title>
        <authorList>
            <person name="Chain P.S.G."/>
            <person name="Hu P."/>
            <person name="Malfatti S.A."/>
            <person name="Radnedge L."/>
            <person name="Larimer F."/>
            <person name="Vergez L.M."/>
            <person name="Worsham P."/>
            <person name="Chu M.C."/>
            <person name="Andersen G.L."/>
        </authorList>
    </citation>
    <scope>NUCLEOTIDE SEQUENCE [LARGE SCALE GENOMIC DNA]</scope>
    <source>
        <strain>Antiqua</strain>
    </source>
</reference>
<feature type="chain" id="PRO_1000023615" description="Arginine repressor">
    <location>
        <begin position="1"/>
        <end position="156"/>
    </location>
</feature>
<evidence type="ECO:0000255" key="1">
    <source>
        <dbReference type="HAMAP-Rule" id="MF_00173"/>
    </source>
</evidence>
<sequence>MRNPAKQEDLIKAFKALLKEEKFSSQGEIVLALQEEGFENINQSKVSRMLTKFGAVRTRNAKMEMVYCLPAELGVPTTSSPLKNLVLDVDYNDSVVVINTSPGAAQLIARLLDSLGKAEGILGSIAGDDTIFTTPARGFTVKQLHEAILRLFEQEL</sequence>
<keyword id="KW-0028">Amino-acid biosynthesis</keyword>
<keyword id="KW-0055">Arginine biosynthesis</keyword>
<keyword id="KW-0963">Cytoplasm</keyword>
<keyword id="KW-0238">DNA-binding</keyword>
<keyword id="KW-0678">Repressor</keyword>
<keyword id="KW-0804">Transcription</keyword>
<keyword id="KW-0805">Transcription regulation</keyword>
<organism>
    <name type="scientific">Yersinia pestis bv. Antiqua (strain Antiqua)</name>
    <dbReference type="NCBI Taxonomy" id="360102"/>
    <lineage>
        <taxon>Bacteria</taxon>
        <taxon>Pseudomonadati</taxon>
        <taxon>Pseudomonadota</taxon>
        <taxon>Gammaproteobacteria</taxon>
        <taxon>Enterobacterales</taxon>
        <taxon>Yersiniaceae</taxon>
        <taxon>Yersinia</taxon>
    </lineage>
</organism>
<name>ARGR_YERPA</name>
<protein>
    <recommendedName>
        <fullName evidence="1">Arginine repressor</fullName>
    </recommendedName>
</protein>